<organism>
    <name type="scientific">Lactobacillus helveticus (strain DPC 4571)</name>
    <dbReference type="NCBI Taxonomy" id="405566"/>
    <lineage>
        <taxon>Bacteria</taxon>
        <taxon>Bacillati</taxon>
        <taxon>Bacillota</taxon>
        <taxon>Bacilli</taxon>
        <taxon>Lactobacillales</taxon>
        <taxon>Lactobacillaceae</taxon>
        <taxon>Lactobacillus</taxon>
    </lineage>
</organism>
<protein>
    <recommendedName>
        <fullName evidence="1">D-aminoacyl-tRNA deacylase</fullName>
        <shortName evidence="1">DTD</shortName>
        <ecNumber evidence="1">3.1.1.96</ecNumber>
    </recommendedName>
    <alternativeName>
        <fullName evidence="1">Gly-tRNA(Ala) deacylase</fullName>
    </alternativeName>
</protein>
<dbReference type="EC" id="3.1.1.96" evidence="1"/>
<dbReference type="EMBL" id="CP000517">
    <property type="protein sequence ID" value="ABX27086.1"/>
    <property type="molecule type" value="Genomic_DNA"/>
</dbReference>
<dbReference type="RefSeq" id="WP_012211788.1">
    <property type="nucleotide sequence ID" value="NC_010080.1"/>
</dbReference>
<dbReference type="SMR" id="A8YUZ8"/>
<dbReference type="KEGG" id="lhe:lhv_1012"/>
<dbReference type="eggNOG" id="COG1490">
    <property type="taxonomic scope" value="Bacteria"/>
</dbReference>
<dbReference type="HOGENOM" id="CLU_076901_1_0_9"/>
<dbReference type="Proteomes" id="UP000000790">
    <property type="component" value="Chromosome"/>
</dbReference>
<dbReference type="GO" id="GO:0005737">
    <property type="term" value="C:cytoplasm"/>
    <property type="evidence" value="ECO:0007669"/>
    <property type="project" value="UniProtKB-SubCell"/>
</dbReference>
<dbReference type="GO" id="GO:0051500">
    <property type="term" value="F:D-tyrosyl-tRNA(Tyr) deacylase activity"/>
    <property type="evidence" value="ECO:0007669"/>
    <property type="project" value="TreeGrafter"/>
</dbReference>
<dbReference type="GO" id="GO:0106026">
    <property type="term" value="F:Gly-tRNA(Ala) deacylase activity"/>
    <property type="evidence" value="ECO:0007669"/>
    <property type="project" value="UniProtKB-UniRule"/>
</dbReference>
<dbReference type="GO" id="GO:0043908">
    <property type="term" value="F:Ser(Gly)-tRNA(Ala) hydrolase activity"/>
    <property type="evidence" value="ECO:0007669"/>
    <property type="project" value="UniProtKB-UniRule"/>
</dbReference>
<dbReference type="GO" id="GO:0000049">
    <property type="term" value="F:tRNA binding"/>
    <property type="evidence" value="ECO:0007669"/>
    <property type="project" value="UniProtKB-UniRule"/>
</dbReference>
<dbReference type="GO" id="GO:0019478">
    <property type="term" value="P:D-amino acid catabolic process"/>
    <property type="evidence" value="ECO:0007669"/>
    <property type="project" value="UniProtKB-UniRule"/>
</dbReference>
<dbReference type="FunFam" id="3.50.80.10:FF:000001">
    <property type="entry name" value="D-aminoacyl-tRNA deacylase"/>
    <property type="match status" value="1"/>
</dbReference>
<dbReference type="Gene3D" id="3.50.80.10">
    <property type="entry name" value="D-tyrosyl-tRNA(Tyr) deacylase"/>
    <property type="match status" value="1"/>
</dbReference>
<dbReference type="HAMAP" id="MF_00518">
    <property type="entry name" value="Deacylase_Dtd"/>
    <property type="match status" value="1"/>
</dbReference>
<dbReference type="InterPro" id="IPR003732">
    <property type="entry name" value="Daa-tRNA_deacyls_DTD"/>
</dbReference>
<dbReference type="InterPro" id="IPR023509">
    <property type="entry name" value="DTD-like_sf"/>
</dbReference>
<dbReference type="NCBIfam" id="TIGR00256">
    <property type="entry name" value="D-aminoacyl-tRNA deacylase"/>
    <property type="match status" value="1"/>
</dbReference>
<dbReference type="PANTHER" id="PTHR10472:SF5">
    <property type="entry name" value="D-AMINOACYL-TRNA DEACYLASE 1"/>
    <property type="match status" value="1"/>
</dbReference>
<dbReference type="PANTHER" id="PTHR10472">
    <property type="entry name" value="D-TYROSYL-TRNA TYR DEACYLASE"/>
    <property type="match status" value="1"/>
</dbReference>
<dbReference type="Pfam" id="PF02580">
    <property type="entry name" value="Tyr_Deacylase"/>
    <property type="match status" value="1"/>
</dbReference>
<dbReference type="SUPFAM" id="SSF69500">
    <property type="entry name" value="DTD-like"/>
    <property type="match status" value="1"/>
</dbReference>
<keyword id="KW-0963">Cytoplasm</keyword>
<keyword id="KW-0378">Hydrolase</keyword>
<keyword id="KW-0694">RNA-binding</keyword>
<keyword id="KW-0820">tRNA-binding</keyword>
<feature type="chain" id="PRO_1000072486" description="D-aminoacyl-tRNA deacylase">
    <location>
        <begin position="1"/>
        <end position="145"/>
    </location>
</feature>
<feature type="short sequence motif" description="Gly-cisPro motif, important for rejection of L-amino acids" evidence="1">
    <location>
        <begin position="137"/>
        <end position="138"/>
    </location>
</feature>
<proteinExistence type="inferred from homology"/>
<accession>A8YUZ8</accession>
<sequence length="145" mass="16043">MRVVIQRVNHAQVNINGKTVGKIGKGVMLLVGIKNGDELPVVKKAADKIAKMRIFEDEEGKTNLSLKDVGGEILSVSQFTLMANTKKGNRPSFVDAMRPPKSKELWEDFNKELEADSFHVETGEFGADMQVELENDGPFTIVLDL</sequence>
<gene>
    <name evidence="1" type="primary">dtd</name>
    <name type="ordered locus">lhv_1012</name>
</gene>
<comment type="function">
    <text evidence="1">An aminoacyl-tRNA editing enzyme that deacylates mischarged D-aminoacyl-tRNAs. Also deacylates mischarged glycyl-tRNA(Ala), protecting cells against glycine mischarging by AlaRS. Acts via tRNA-based rather than protein-based catalysis; rejects L-amino acids rather than detecting D-amino acids in the active site. By recycling D-aminoacyl-tRNA to D-amino acids and free tRNA molecules, this enzyme counteracts the toxicity associated with the formation of D-aminoacyl-tRNA entities in vivo and helps enforce protein L-homochirality.</text>
</comment>
<comment type="catalytic activity">
    <reaction evidence="1">
        <text>glycyl-tRNA(Ala) + H2O = tRNA(Ala) + glycine + H(+)</text>
        <dbReference type="Rhea" id="RHEA:53744"/>
        <dbReference type="Rhea" id="RHEA-COMP:9657"/>
        <dbReference type="Rhea" id="RHEA-COMP:13640"/>
        <dbReference type="ChEBI" id="CHEBI:15377"/>
        <dbReference type="ChEBI" id="CHEBI:15378"/>
        <dbReference type="ChEBI" id="CHEBI:57305"/>
        <dbReference type="ChEBI" id="CHEBI:78442"/>
        <dbReference type="ChEBI" id="CHEBI:78522"/>
        <dbReference type="EC" id="3.1.1.96"/>
    </reaction>
</comment>
<comment type="catalytic activity">
    <reaction evidence="1">
        <text>a D-aminoacyl-tRNA + H2O = a tRNA + a D-alpha-amino acid + H(+)</text>
        <dbReference type="Rhea" id="RHEA:13953"/>
        <dbReference type="Rhea" id="RHEA-COMP:10123"/>
        <dbReference type="Rhea" id="RHEA-COMP:10124"/>
        <dbReference type="ChEBI" id="CHEBI:15377"/>
        <dbReference type="ChEBI" id="CHEBI:15378"/>
        <dbReference type="ChEBI" id="CHEBI:59871"/>
        <dbReference type="ChEBI" id="CHEBI:78442"/>
        <dbReference type="ChEBI" id="CHEBI:79333"/>
        <dbReference type="EC" id="3.1.1.96"/>
    </reaction>
</comment>
<comment type="subunit">
    <text evidence="1">Homodimer.</text>
</comment>
<comment type="subcellular location">
    <subcellularLocation>
        <location evidence="1">Cytoplasm</location>
    </subcellularLocation>
</comment>
<comment type="domain">
    <text evidence="1">A Gly-cisPro motif from one monomer fits into the active site of the other monomer to allow specific chiral rejection of L-amino acids.</text>
</comment>
<comment type="similarity">
    <text evidence="1">Belongs to the DTD family.</text>
</comment>
<reference key="1">
    <citation type="journal article" date="2008" name="J. Bacteriol.">
        <title>Genome sequence of Lactobacillus helveticus: an organism distinguished by selective gene loss and IS element expansion.</title>
        <authorList>
            <person name="Callanan M."/>
            <person name="Kaleta P."/>
            <person name="O'Callaghan J."/>
            <person name="O'Sullivan O."/>
            <person name="Jordan K."/>
            <person name="McAuliffe O."/>
            <person name="Sangrador-Vegas A."/>
            <person name="Slattery L."/>
            <person name="Fitzgerald G.F."/>
            <person name="Beresford T."/>
            <person name="Ross R.P."/>
        </authorList>
    </citation>
    <scope>NUCLEOTIDE SEQUENCE [LARGE SCALE GENOMIC DNA]</scope>
    <source>
        <strain>DPC 4571</strain>
    </source>
</reference>
<evidence type="ECO:0000255" key="1">
    <source>
        <dbReference type="HAMAP-Rule" id="MF_00518"/>
    </source>
</evidence>
<name>DTD_LACH4</name>